<keyword id="KW-0067">ATP-binding</keyword>
<keyword id="KW-0963">Cytoplasm</keyword>
<keyword id="KW-0275">Fatty acid biosynthesis</keyword>
<keyword id="KW-0276">Fatty acid metabolism</keyword>
<keyword id="KW-0444">Lipid biosynthesis</keyword>
<keyword id="KW-0443">Lipid metabolism</keyword>
<keyword id="KW-0547">Nucleotide-binding</keyword>
<keyword id="KW-1185">Reference proteome</keyword>
<keyword id="KW-0808">Transferase</keyword>
<dbReference type="EC" id="2.1.3.15" evidence="1"/>
<dbReference type="EMBL" id="AE003852">
    <property type="protein sequence ID" value="AAF95388.1"/>
    <property type="molecule type" value="Genomic_DNA"/>
</dbReference>
<dbReference type="PIR" id="F82100">
    <property type="entry name" value="F82100"/>
</dbReference>
<dbReference type="RefSeq" id="NP_231875.1">
    <property type="nucleotide sequence ID" value="NC_002505.1"/>
</dbReference>
<dbReference type="RefSeq" id="WP_000055726.1">
    <property type="nucleotide sequence ID" value="NZ_LT906614.1"/>
</dbReference>
<dbReference type="SMR" id="Q9KPW8"/>
<dbReference type="STRING" id="243277.VC_2244"/>
<dbReference type="DNASU" id="2613166"/>
<dbReference type="EnsemblBacteria" id="AAF95388">
    <property type="protein sequence ID" value="AAF95388"/>
    <property type="gene ID" value="VC_2244"/>
</dbReference>
<dbReference type="GeneID" id="69719131"/>
<dbReference type="KEGG" id="vch:VC_2244"/>
<dbReference type="PATRIC" id="fig|243277.26.peg.2140"/>
<dbReference type="eggNOG" id="COG0825">
    <property type="taxonomic scope" value="Bacteria"/>
</dbReference>
<dbReference type="HOGENOM" id="CLU_015486_0_2_6"/>
<dbReference type="UniPathway" id="UPA00655">
    <property type="reaction ID" value="UER00711"/>
</dbReference>
<dbReference type="Proteomes" id="UP000000584">
    <property type="component" value="Chromosome 1"/>
</dbReference>
<dbReference type="GO" id="GO:0009317">
    <property type="term" value="C:acetyl-CoA carboxylase complex"/>
    <property type="evidence" value="ECO:0007669"/>
    <property type="project" value="InterPro"/>
</dbReference>
<dbReference type="GO" id="GO:0003989">
    <property type="term" value="F:acetyl-CoA carboxylase activity"/>
    <property type="evidence" value="ECO:0007669"/>
    <property type="project" value="InterPro"/>
</dbReference>
<dbReference type="GO" id="GO:0005524">
    <property type="term" value="F:ATP binding"/>
    <property type="evidence" value="ECO:0007669"/>
    <property type="project" value="UniProtKB-KW"/>
</dbReference>
<dbReference type="GO" id="GO:0016743">
    <property type="term" value="F:carboxyl- or carbamoyltransferase activity"/>
    <property type="evidence" value="ECO:0007669"/>
    <property type="project" value="UniProtKB-UniRule"/>
</dbReference>
<dbReference type="GO" id="GO:0006633">
    <property type="term" value="P:fatty acid biosynthetic process"/>
    <property type="evidence" value="ECO:0007669"/>
    <property type="project" value="UniProtKB-KW"/>
</dbReference>
<dbReference type="GO" id="GO:2001295">
    <property type="term" value="P:malonyl-CoA biosynthetic process"/>
    <property type="evidence" value="ECO:0007669"/>
    <property type="project" value="UniProtKB-UniRule"/>
</dbReference>
<dbReference type="FunFam" id="3.90.226.10:FF:000008">
    <property type="entry name" value="Acetyl-coenzyme A carboxylase carboxyl transferase subunit alpha"/>
    <property type="match status" value="1"/>
</dbReference>
<dbReference type="Gene3D" id="3.90.226.10">
    <property type="entry name" value="2-enoyl-CoA Hydratase, Chain A, domain 1"/>
    <property type="match status" value="1"/>
</dbReference>
<dbReference type="HAMAP" id="MF_00823">
    <property type="entry name" value="AcetylCoA_CT_alpha"/>
    <property type="match status" value="1"/>
</dbReference>
<dbReference type="InterPro" id="IPR001095">
    <property type="entry name" value="Acetyl_CoA_COase_a_su"/>
</dbReference>
<dbReference type="InterPro" id="IPR029045">
    <property type="entry name" value="ClpP/crotonase-like_dom_sf"/>
</dbReference>
<dbReference type="InterPro" id="IPR011763">
    <property type="entry name" value="COA_CT_C"/>
</dbReference>
<dbReference type="NCBIfam" id="TIGR00513">
    <property type="entry name" value="accA"/>
    <property type="match status" value="1"/>
</dbReference>
<dbReference type="NCBIfam" id="NF041504">
    <property type="entry name" value="AccA_sub"/>
    <property type="match status" value="1"/>
</dbReference>
<dbReference type="NCBIfam" id="NF004344">
    <property type="entry name" value="PRK05724.1"/>
    <property type="match status" value="1"/>
</dbReference>
<dbReference type="PANTHER" id="PTHR42853">
    <property type="entry name" value="ACETYL-COENZYME A CARBOXYLASE CARBOXYL TRANSFERASE SUBUNIT ALPHA"/>
    <property type="match status" value="1"/>
</dbReference>
<dbReference type="PANTHER" id="PTHR42853:SF3">
    <property type="entry name" value="ACETYL-COENZYME A CARBOXYLASE CARBOXYL TRANSFERASE SUBUNIT ALPHA, CHLOROPLASTIC"/>
    <property type="match status" value="1"/>
</dbReference>
<dbReference type="Pfam" id="PF03255">
    <property type="entry name" value="ACCA"/>
    <property type="match status" value="1"/>
</dbReference>
<dbReference type="PRINTS" id="PR01069">
    <property type="entry name" value="ACCCTRFRASEA"/>
</dbReference>
<dbReference type="SUPFAM" id="SSF52096">
    <property type="entry name" value="ClpP/crotonase"/>
    <property type="match status" value="1"/>
</dbReference>
<dbReference type="PROSITE" id="PS50989">
    <property type="entry name" value="COA_CT_CTER"/>
    <property type="match status" value="1"/>
</dbReference>
<name>ACCA_VIBCH</name>
<proteinExistence type="inferred from homology"/>
<comment type="function">
    <text evidence="1">Component of the acetyl coenzyme A carboxylase (ACC) complex. First, biotin carboxylase catalyzes the carboxylation of biotin on its carrier protein (BCCP) and then the CO(2) group is transferred by the carboxyltransferase to acetyl-CoA to form malonyl-CoA.</text>
</comment>
<comment type="catalytic activity">
    <reaction evidence="1">
        <text>N(6)-carboxybiotinyl-L-lysyl-[protein] + acetyl-CoA = N(6)-biotinyl-L-lysyl-[protein] + malonyl-CoA</text>
        <dbReference type="Rhea" id="RHEA:54728"/>
        <dbReference type="Rhea" id="RHEA-COMP:10505"/>
        <dbReference type="Rhea" id="RHEA-COMP:10506"/>
        <dbReference type="ChEBI" id="CHEBI:57288"/>
        <dbReference type="ChEBI" id="CHEBI:57384"/>
        <dbReference type="ChEBI" id="CHEBI:83144"/>
        <dbReference type="ChEBI" id="CHEBI:83145"/>
        <dbReference type="EC" id="2.1.3.15"/>
    </reaction>
</comment>
<comment type="pathway">
    <text evidence="1">Lipid metabolism; malonyl-CoA biosynthesis; malonyl-CoA from acetyl-CoA: step 1/1.</text>
</comment>
<comment type="subunit">
    <text evidence="1">Acetyl-CoA carboxylase is a heterohexamer composed of biotin carboxyl carrier protein (AccB), biotin carboxylase (AccC) and two subunits each of ACCase subunit alpha (AccA) and ACCase subunit beta (AccD).</text>
</comment>
<comment type="subcellular location">
    <subcellularLocation>
        <location evidence="1">Cytoplasm</location>
    </subcellularLocation>
</comment>
<comment type="similarity">
    <text evidence="1">Belongs to the AccA family.</text>
</comment>
<sequence length="319" mass="35620">MSLNFLDFEKPIVELETKIQALRDVSRHSTSASVDLDKELEQLEKKSLELKKKIFSDLGAWQVAQLARHPQRPYTLDYLKHIFTEFDELAGDRAYADDKAIVGGIARLEGRSVMVIGHQKGRETREKVKRNFGMPKPEGYRKALRLMEMAERFNMPIITFIDTAGAYPGVGAEERGQSEAIAKNLKVMSGLKVPVICNVVGEGGSGGALAIGVGDYVNMLQYSTYSVISPEGCASILWRDSDKAPQAAEAMGLIAPRLKELELIDEIIEEPLGGAHRDHKQTAENVKATLLRQLADLDALDHENLLERRYQRLMNYGYC</sequence>
<feature type="chain" id="PRO_0000223847" description="Acetyl-coenzyme A carboxylase carboxyl transferase subunit alpha">
    <location>
        <begin position="1"/>
        <end position="319"/>
    </location>
</feature>
<feature type="domain" description="CoA carboxyltransferase C-terminal" evidence="2">
    <location>
        <begin position="35"/>
        <end position="296"/>
    </location>
</feature>
<accession>Q9KPW8</accession>
<organism>
    <name type="scientific">Vibrio cholerae serotype O1 (strain ATCC 39315 / El Tor Inaba N16961)</name>
    <dbReference type="NCBI Taxonomy" id="243277"/>
    <lineage>
        <taxon>Bacteria</taxon>
        <taxon>Pseudomonadati</taxon>
        <taxon>Pseudomonadota</taxon>
        <taxon>Gammaproteobacteria</taxon>
        <taxon>Vibrionales</taxon>
        <taxon>Vibrionaceae</taxon>
        <taxon>Vibrio</taxon>
    </lineage>
</organism>
<protein>
    <recommendedName>
        <fullName evidence="1">Acetyl-coenzyme A carboxylase carboxyl transferase subunit alpha</fullName>
        <shortName evidence="1">ACCase subunit alpha</shortName>
        <shortName evidence="1">Acetyl-CoA carboxylase carboxyltransferase subunit alpha</shortName>
        <ecNumber evidence="1">2.1.3.15</ecNumber>
    </recommendedName>
</protein>
<gene>
    <name evidence="1" type="primary">accA</name>
    <name type="ordered locus">VC_2244</name>
</gene>
<evidence type="ECO:0000255" key="1">
    <source>
        <dbReference type="HAMAP-Rule" id="MF_00823"/>
    </source>
</evidence>
<evidence type="ECO:0000255" key="2">
    <source>
        <dbReference type="PROSITE-ProRule" id="PRU01137"/>
    </source>
</evidence>
<reference key="1">
    <citation type="journal article" date="2000" name="Nature">
        <title>DNA sequence of both chromosomes of the cholera pathogen Vibrio cholerae.</title>
        <authorList>
            <person name="Heidelberg J.F."/>
            <person name="Eisen J.A."/>
            <person name="Nelson W.C."/>
            <person name="Clayton R.A."/>
            <person name="Gwinn M.L."/>
            <person name="Dodson R.J."/>
            <person name="Haft D.H."/>
            <person name="Hickey E.K."/>
            <person name="Peterson J.D."/>
            <person name="Umayam L.A."/>
            <person name="Gill S.R."/>
            <person name="Nelson K.E."/>
            <person name="Read T.D."/>
            <person name="Tettelin H."/>
            <person name="Richardson D.L."/>
            <person name="Ermolaeva M.D."/>
            <person name="Vamathevan J.J."/>
            <person name="Bass S."/>
            <person name="Qin H."/>
            <person name="Dragoi I."/>
            <person name="Sellers P."/>
            <person name="McDonald L.A."/>
            <person name="Utterback T.R."/>
            <person name="Fleischmann R.D."/>
            <person name="Nierman W.C."/>
            <person name="White O."/>
            <person name="Salzberg S.L."/>
            <person name="Smith H.O."/>
            <person name="Colwell R.R."/>
            <person name="Mekalanos J.J."/>
            <person name="Venter J.C."/>
            <person name="Fraser C.M."/>
        </authorList>
    </citation>
    <scope>NUCLEOTIDE SEQUENCE [LARGE SCALE GENOMIC DNA]</scope>
    <source>
        <strain>ATCC 39315 / El Tor Inaba N16961</strain>
    </source>
</reference>